<gene>
    <name type="primary">TMA22</name>
    <name type="ORF">CHGG_05918</name>
</gene>
<protein>
    <recommendedName>
        <fullName>Translation machinery-associated protein 22</fullName>
    </recommendedName>
</protein>
<accession>Q2H5Z7</accession>
<feature type="chain" id="PRO_0000320439" description="Translation machinery-associated protein 22">
    <location>
        <begin position="1"/>
        <end position="188"/>
    </location>
</feature>
<feature type="domain" description="SUI1" evidence="2">
    <location>
        <begin position="96"/>
        <end position="167"/>
    </location>
</feature>
<proteinExistence type="inferred from homology"/>
<reference key="1">
    <citation type="journal article" date="2015" name="Genome Announc.">
        <title>Draft genome sequence of the cellulolytic fungus Chaetomium globosum.</title>
        <authorList>
            <person name="Cuomo C.A."/>
            <person name="Untereiner W.A."/>
            <person name="Ma L.-J."/>
            <person name="Grabherr M."/>
            <person name="Birren B.W."/>
        </authorList>
    </citation>
    <scope>NUCLEOTIDE SEQUENCE [LARGE SCALE GENOMIC DNA]</scope>
    <source>
        <strain>ATCC 6205 / CBS 148.51 / DSM 1962 / NBRC 6347 / NRRL 1970</strain>
    </source>
</reference>
<keyword id="KW-0963">Cytoplasm</keyword>
<keyword id="KW-1185">Reference proteome</keyword>
<keyword id="KW-0687">Ribonucleoprotein</keyword>
<keyword id="KW-0689">Ribosomal protein</keyword>
<evidence type="ECO:0000250" key="1"/>
<evidence type="ECO:0000255" key="2">
    <source>
        <dbReference type="PROSITE-ProRule" id="PRU00200"/>
    </source>
</evidence>
<evidence type="ECO:0000305" key="3"/>
<organism>
    <name type="scientific">Chaetomium globosum (strain ATCC 6205 / CBS 148.51 / DSM 1962 / NBRC 6347 / NRRL 1970)</name>
    <name type="common">Soil fungus</name>
    <dbReference type="NCBI Taxonomy" id="306901"/>
    <lineage>
        <taxon>Eukaryota</taxon>
        <taxon>Fungi</taxon>
        <taxon>Dikarya</taxon>
        <taxon>Ascomycota</taxon>
        <taxon>Pezizomycotina</taxon>
        <taxon>Sordariomycetes</taxon>
        <taxon>Sordariomycetidae</taxon>
        <taxon>Sordariales</taxon>
        <taxon>Chaetomiaceae</taxon>
        <taxon>Chaetomium</taxon>
    </lineage>
</organism>
<name>DENR_CHAGB</name>
<dbReference type="EMBL" id="CH408031">
    <property type="protein sequence ID" value="EAQ89299.1"/>
    <property type="molecule type" value="Genomic_DNA"/>
</dbReference>
<dbReference type="RefSeq" id="XP_001222013.1">
    <property type="nucleotide sequence ID" value="XM_001222012.1"/>
</dbReference>
<dbReference type="SMR" id="Q2H5Z7"/>
<dbReference type="FunCoup" id="Q2H5Z7">
    <property type="interactions" value="1057"/>
</dbReference>
<dbReference type="STRING" id="306901.Q2H5Z7"/>
<dbReference type="GeneID" id="4391426"/>
<dbReference type="VEuPathDB" id="FungiDB:CHGG_05918"/>
<dbReference type="eggNOG" id="KOG3239">
    <property type="taxonomic scope" value="Eukaryota"/>
</dbReference>
<dbReference type="HOGENOM" id="CLU_073511_0_1_1"/>
<dbReference type="InParanoid" id="Q2H5Z7"/>
<dbReference type="OMA" id="EVFEIDM"/>
<dbReference type="OrthoDB" id="277199at2759"/>
<dbReference type="Proteomes" id="UP000001056">
    <property type="component" value="Unassembled WGS sequence"/>
</dbReference>
<dbReference type="GO" id="GO:0005737">
    <property type="term" value="C:cytoplasm"/>
    <property type="evidence" value="ECO:0007669"/>
    <property type="project" value="UniProtKB-SubCell"/>
</dbReference>
<dbReference type="GO" id="GO:1990904">
    <property type="term" value="C:ribonucleoprotein complex"/>
    <property type="evidence" value="ECO:0007669"/>
    <property type="project" value="UniProtKB-KW"/>
</dbReference>
<dbReference type="GO" id="GO:0005840">
    <property type="term" value="C:ribosome"/>
    <property type="evidence" value="ECO:0007669"/>
    <property type="project" value="UniProtKB-KW"/>
</dbReference>
<dbReference type="GO" id="GO:0003729">
    <property type="term" value="F:mRNA binding"/>
    <property type="evidence" value="ECO:0007669"/>
    <property type="project" value="TreeGrafter"/>
</dbReference>
<dbReference type="GO" id="GO:0003743">
    <property type="term" value="F:translation initiation factor activity"/>
    <property type="evidence" value="ECO:0007669"/>
    <property type="project" value="InterPro"/>
</dbReference>
<dbReference type="GO" id="GO:0001731">
    <property type="term" value="P:formation of translation preinitiation complex"/>
    <property type="evidence" value="ECO:0007669"/>
    <property type="project" value="TreeGrafter"/>
</dbReference>
<dbReference type="GO" id="GO:0000184">
    <property type="term" value="P:nuclear-transcribed mRNA catabolic process, nonsense-mediated decay"/>
    <property type="evidence" value="ECO:0007669"/>
    <property type="project" value="EnsemblFungi"/>
</dbReference>
<dbReference type="GO" id="GO:0032790">
    <property type="term" value="P:ribosome disassembly"/>
    <property type="evidence" value="ECO:0007669"/>
    <property type="project" value="EnsemblFungi"/>
</dbReference>
<dbReference type="GO" id="GO:0002188">
    <property type="term" value="P:translation reinitiation"/>
    <property type="evidence" value="ECO:0007669"/>
    <property type="project" value="TreeGrafter"/>
</dbReference>
<dbReference type="CDD" id="cd11607">
    <property type="entry name" value="DENR_C"/>
    <property type="match status" value="1"/>
</dbReference>
<dbReference type="Gene3D" id="3.30.780.10">
    <property type="entry name" value="SUI1-like domain"/>
    <property type="match status" value="1"/>
</dbReference>
<dbReference type="InterPro" id="IPR050318">
    <property type="entry name" value="DENR/SUI1_TIF"/>
</dbReference>
<dbReference type="InterPro" id="IPR046447">
    <property type="entry name" value="DENR_C"/>
</dbReference>
<dbReference type="InterPro" id="IPR005873">
    <property type="entry name" value="DENR_eukaryotes"/>
</dbReference>
<dbReference type="InterPro" id="IPR048517">
    <property type="entry name" value="DENR_N"/>
</dbReference>
<dbReference type="InterPro" id="IPR001950">
    <property type="entry name" value="SUI1"/>
</dbReference>
<dbReference type="InterPro" id="IPR036877">
    <property type="entry name" value="SUI1_dom_sf"/>
</dbReference>
<dbReference type="NCBIfam" id="TIGR01159">
    <property type="entry name" value="DRP1"/>
    <property type="match status" value="1"/>
</dbReference>
<dbReference type="PANTHER" id="PTHR12789:SF0">
    <property type="entry name" value="DENSITY-REGULATED PROTEIN"/>
    <property type="match status" value="1"/>
</dbReference>
<dbReference type="PANTHER" id="PTHR12789">
    <property type="entry name" value="DENSITY-REGULATED PROTEIN HOMOLOG"/>
    <property type="match status" value="1"/>
</dbReference>
<dbReference type="Pfam" id="PF21023">
    <property type="entry name" value="DENR_N"/>
    <property type="match status" value="1"/>
</dbReference>
<dbReference type="Pfam" id="PF01253">
    <property type="entry name" value="SUI1"/>
    <property type="match status" value="1"/>
</dbReference>
<dbReference type="SUPFAM" id="SSF55159">
    <property type="entry name" value="eIF1-like"/>
    <property type="match status" value="1"/>
</dbReference>
<dbReference type="PROSITE" id="PS50296">
    <property type="entry name" value="SUI1"/>
    <property type="match status" value="1"/>
</dbReference>
<sequence>MAEPTPVGREIIYCGVCTLPPEYCEYGGTTKKCQEWLEKKHPDLYARIWSPEALEAATASLSLAAQERAAKDAAKKAAKAEAAEQKHADKLAKSVVTIKRIERNKRKFVTSVTGLEAFGLELKKVAKDFGKKFATGASVTKVPSGGEEIVVQGDVSGEIEEFLLEKYKDIPEDNIELVEDKKKKASAG</sequence>
<comment type="subunit">
    <text evidence="1">Interacts with the 40S ribosomal subunit.</text>
</comment>
<comment type="subcellular location">
    <subcellularLocation>
        <location evidence="1">Cytoplasm</location>
    </subcellularLocation>
</comment>
<comment type="domain">
    <text>The SUI1 domain may be involved in RNA binding.</text>
</comment>
<comment type="similarity">
    <text evidence="3">Belongs to the DENR family.</text>
</comment>